<name>COAE_NEIMA</name>
<feature type="chain" id="PRO_0000172967" description="Dephospho-CoA kinase">
    <location>
        <begin position="1"/>
        <end position="210"/>
    </location>
</feature>
<feature type="domain" description="DPCK" evidence="1">
    <location>
        <begin position="4"/>
        <end position="202"/>
    </location>
</feature>
<feature type="binding site" evidence="1">
    <location>
        <begin position="12"/>
        <end position="17"/>
    </location>
    <ligand>
        <name>ATP</name>
        <dbReference type="ChEBI" id="CHEBI:30616"/>
    </ligand>
</feature>
<comment type="function">
    <text evidence="1">Catalyzes the phosphorylation of the 3'-hydroxyl group of dephosphocoenzyme A to form coenzyme A.</text>
</comment>
<comment type="catalytic activity">
    <reaction evidence="1">
        <text>3'-dephospho-CoA + ATP = ADP + CoA + H(+)</text>
        <dbReference type="Rhea" id="RHEA:18245"/>
        <dbReference type="ChEBI" id="CHEBI:15378"/>
        <dbReference type="ChEBI" id="CHEBI:30616"/>
        <dbReference type="ChEBI" id="CHEBI:57287"/>
        <dbReference type="ChEBI" id="CHEBI:57328"/>
        <dbReference type="ChEBI" id="CHEBI:456216"/>
        <dbReference type="EC" id="2.7.1.24"/>
    </reaction>
</comment>
<comment type="pathway">
    <text evidence="1">Cofactor biosynthesis; coenzyme A biosynthesis; CoA from (R)-pantothenate: step 5/5.</text>
</comment>
<comment type="subcellular location">
    <subcellularLocation>
        <location evidence="1">Cytoplasm</location>
    </subcellularLocation>
</comment>
<comment type="similarity">
    <text evidence="1 2">Belongs to the CoaE family.</text>
</comment>
<organism>
    <name type="scientific">Neisseria meningitidis serogroup A / serotype 4A (strain DSM 15465 / Z2491)</name>
    <dbReference type="NCBI Taxonomy" id="122587"/>
    <lineage>
        <taxon>Bacteria</taxon>
        <taxon>Pseudomonadati</taxon>
        <taxon>Pseudomonadota</taxon>
        <taxon>Betaproteobacteria</taxon>
        <taxon>Neisseriales</taxon>
        <taxon>Neisseriaceae</taxon>
        <taxon>Neisseria</taxon>
    </lineage>
</organism>
<evidence type="ECO:0000255" key="1">
    <source>
        <dbReference type="HAMAP-Rule" id="MF_00376"/>
    </source>
</evidence>
<evidence type="ECO:0000305" key="2"/>
<dbReference type="EC" id="2.7.1.24" evidence="1"/>
<dbReference type="EMBL" id="AL157959">
    <property type="protein sequence ID" value="CAM09253.1"/>
    <property type="molecule type" value="Genomic_DNA"/>
</dbReference>
<dbReference type="PIR" id="B81788">
    <property type="entry name" value="B81788"/>
</dbReference>
<dbReference type="RefSeq" id="WP_002221968.1">
    <property type="nucleotide sequence ID" value="NC_003116.1"/>
</dbReference>
<dbReference type="SMR" id="Q9JSS4"/>
<dbReference type="EnsemblBacteria" id="CAM09253">
    <property type="protein sequence ID" value="CAM09253"/>
    <property type="gene ID" value="NMA2157"/>
</dbReference>
<dbReference type="KEGG" id="nma:NMA2157"/>
<dbReference type="HOGENOM" id="CLU_057180_1_2_4"/>
<dbReference type="UniPathway" id="UPA00241">
    <property type="reaction ID" value="UER00356"/>
</dbReference>
<dbReference type="Proteomes" id="UP000000626">
    <property type="component" value="Chromosome"/>
</dbReference>
<dbReference type="GO" id="GO:0005737">
    <property type="term" value="C:cytoplasm"/>
    <property type="evidence" value="ECO:0007669"/>
    <property type="project" value="UniProtKB-SubCell"/>
</dbReference>
<dbReference type="GO" id="GO:0005524">
    <property type="term" value="F:ATP binding"/>
    <property type="evidence" value="ECO:0007669"/>
    <property type="project" value="UniProtKB-UniRule"/>
</dbReference>
<dbReference type="GO" id="GO:0004140">
    <property type="term" value="F:dephospho-CoA kinase activity"/>
    <property type="evidence" value="ECO:0007669"/>
    <property type="project" value="UniProtKB-UniRule"/>
</dbReference>
<dbReference type="GO" id="GO:0015937">
    <property type="term" value="P:coenzyme A biosynthetic process"/>
    <property type="evidence" value="ECO:0007669"/>
    <property type="project" value="UniProtKB-UniRule"/>
</dbReference>
<dbReference type="CDD" id="cd02022">
    <property type="entry name" value="DPCK"/>
    <property type="match status" value="1"/>
</dbReference>
<dbReference type="FunFam" id="3.40.50.300:FF:002756">
    <property type="entry name" value="Dephospho-CoA kinase"/>
    <property type="match status" value="1"/>
</dbReference>
<dbReference type="Gene3D" id="3.40.50.300">
    <property type="entry name" value="P-loop containing nucleotide triphosphate hydrolases"/>
    <property type="match status" value="1"/>
</dbReference>
<dbReference type="HAMAP" id="MF_00376">
    <property type="entry name" value="Dephospho_CoA_kinase"/>
    <property type="match status" value="1"/>
</dbReference>
<dbReference type="InterPro" id="IPR001977">
    <property type="entry name" value="Depp_CoAkinase"/>
</dbReference>
<dbReference type="InterPro" id="IPR027417">
    <property type="entry name" value="P-loop_NTPase"/>
</dbReference>
<dbReference type="NCBIfam" id="TIGR00152">
    <property type="entry name" value="dephospho-CoA kinase"/>
    <property type="match status" value="1"/>
</dbReference>
<dbReference type="PANTHER" id="PTHR10695:SF46">
    <property type="entry name" value="BIFUNCTIONAL COENZYME A SYNTHASE-RELATED"/>
    <property type="match status" value="1"/>
</dbReference>
<dbReference type="PANTHER" id="PTHR10695">
    <property type="entry name" value="DEPHOSPHO-COA KINASE-RELATED"/>
    <property type="match status" value="1"/>
</dbReference>
<dbReference type="Pfam" id="PF01121">
    <property type="entry name" value="CoaE"/>
    <property type="match status" value="1"/>
</dbReference>
<dbReference type="SUPFAM" id="SSF52540">
    <property type="entry name" value="P-loop containing nucleoside triphosphate hydrolases"/>
    <property type="match status" value="1"/>
</dbReference>
<dbReference type="PROSITE" id="PS51219">
    <property type="entry name" value="DPCK"/>
    <property type="match status" value="1"/>
</dbReference>
<keyword id="KW-0067">ATP-binding</keyword>
<keyword id="KW-0173">Coenzyme A biosynthesis</keyword>
<keyword id="KW-0963">Cytoplasm</keyword>
<keyword id="KW-0418">Kinase</keyword>
<keyword id="KW-0547">Nucleotide-binding</keyword>
<keyword id="KW-0808">Transferase</keyword>
<reference key="1">
    <citation type="journal article" date="2000" name="Nature">
        <title>Complete DNA sequence of a serogroup A strain of Neisseria meningitidis Z2491.</title>
        <authorList>
            <person name="Parkhill J."/>
            <person name="Achtman M."/>
            <person name="James K.D."/>
            <person name="Bentley S.D."/>
            <person name="Churcher C.M."/>
            <person name="Klee S.R."/>
            <person name="Morelli G."/>
            <person name="Basham D."/>
            <person name="Brown D."/>
            <person name="Chillingworth T."/>
            <person name="Davies R.M."/>
            <person name="Davis P."/>
            <person name="Devlin K."/>
            <person name="Feltwell T."/>
            <person name="Hamlin N."/>
            <person name="Holroyd S."/>
            <person name="Jagels K."/>
            <person name="Leather S."/>
            <person name="Moule S."/>
            <person name="Mungall K.L."/>
            <person name="Quail M.A."/>
            <person name="Rajandream M.A."/>
            <person name="Rutherford K.M."/>
            <person name="Simmonds M."/>
            <person name="Skelton J."/>
            <person name="Whitehead S."/>
            <person name="Spratt B.G."/>
            <person name="Barrell B.G."/>
        </authorList>
    </citation>
    <scope>NUCLEOTIDE SEQUENCE [LARGE SCALE GENOMIC DNA]</scope>
    <source>
        <strain>DSM 15465 / Z2491</strain>
    </source>
</reference>
<protein>
    <recommendedName>
        <fullName evidence="1">Dephospho-CoA kinase</fullName>
        <ecNumber evidence="1">2.7.1.24</ecNumber>
    </recommendedName>
    <alternativeName>
        <fullName evidence="1">Dephosphocoenzyme A kinase</fullName>
    </alternativeName>
</protein>
<sequence>MTVWVGLTGGIGSGKSAAAQCFADLGVPRIDADAAAHSLTASDGIALPEIRRLFGDTVFDTQGLLRRDILRKEVFASPSRKALLESVMLPLIFSEIKKQQETFTDAAYGIVEIPLLTEKRQFISLIRRVLTISAPLEKRIGRVMARSGLTRGEVAAVISHQASESERLLLADDVLLNDGSLKSLREKTMRLHAFYSGIFASKPTQGKHNG</sequence>
<accession>Q9JSS4</accession>
<accession>A1ITY4</accession>
<gene>
    <name evidence="1" type="primary">coaE</name>
    <name type="ordered locus">NMA2157</name>
</gene>
<proteinExistence type="inferred from homology"/>